<name>YIDC_LAWIP</name>
<accession>Q1MPF3</accession>
<comment type="function">
    <text evidence="1">Required for the insertion and/or proper folding and/or complex formation of integral membrane proteins into the membrane. Involved in integration of membrane proteins that insert both dependently and independently of the Sec translocase complex, as well as at least some lipoproteins. Aids folding of multispanning membrane proteins.</text>
</comment>
<comment type="subunit">
    <text evidence="1">Interacts with the Sec translocase complex via SecD. Specifically interacts with transmembrane segments of nascent integral membrane proteins during membrane integration.</text>
</comment>
<comment type="subcellular location">
    <subcellularLocation>
        <location evidence="1">Cell membrane</location>
        <topology evidence="1">Multi-pass membrane protein</topology>
    </subcellularLocation>
</comment>
<comment type="similarity">
    <text evidence="1">Belongs to the OXA1/ALB3/YidC family. Type 1 subfamily.</text>
</comment>
<feature type="chain" id="PRO_1000215973" description="Membrane protein insertase YidC">
    <location>
        <begin position="1"/>
        <end position="532"/>
    </location>
</feature>
<feature type="transmembrane region" description="Helical" evidence="1">
    <location>
        <begin position="6"/>
        <end position="26"/>
    </location>
</feature>
<feature type="transmembrane region" description="Helical" evidence="1">
    <location>
        <begin position="317"/>
        <end position="337"/>
    </location>
</feature>
<feature type="transmembrane region" description="Helical" evidence="1">
    <location>
        <begin position="342"/>
        <end position="362"/>
    </location>
</feature>
<feature type="transmembrane region" description="Helical" evidence="1">
    <location>
        <begin position="411"/>
        <end position="431"/>
    </location>
</feature>
<feature type="transmembrane region" description="Helical" evidence="1">
    <location>
        <begin position="451"/>
        <end position="473"/>
    </location>
</feature>
<feature type="transmembrane region" description="Helical" evidence="1">
    <location>
        <begin position="496"/>
        <end position="516"/>
    </location>
</feature>
<sequence>MEDKRIVLAIILSLVVFLGWHSFAEYMGWISPKVQHVANERHSSVDQTATSNIALDSVQSVFSPPTGKDVYIETPLYIAKIHSSGGILSSFILKKYKVNLDNTSPLVNLVSPEASQAMPLGITLNGQPSWSNGNWSFLGGDLYLKPGETKELTFVGIVNGVKIIRIFTFNADSYLIHEKLQLASEKQNSCPTKVGLLVAATPFGTGQYDPTRMAWSIKDSFKEETSIDTLKEKGIQESGEFNWGGVMSNYFMNVVALSDPLYLTIKGRIQNDVWRVALERSNVLIPAEGTTSITVNWWFGPKDRELLSRAPDKLENAIDFGMFSIIAKPLLTALTFFYEYTGNWGVAIIVLTLCIKIVFWPLSQKSYNSMEQMKKLQPMMQKLREKYANDRDTLNREIMQLYKTYKVNPAGGCLPILLQIPVFIGLYQALLNSIELRHATFIYYLPFTHLVWLADLSAADPFYITPLLMGASMFLQQKLTPASGDPTQQKIMMVMPIIFTVMFLNFPAGLVIYWLFNNLLSIGQQWWMLRKA</sequence>
<organism>
    <name type="scientific">Lawsonia intracellularis (strain PHE/MN1-00)</name>
    <dbReference type="NCBI Taxonomy" id="363253"/>
    <lineage>
        <taxon>Bacteria</taxon>
        <taxon>Pseudomonadati</taxon>
        <taxon>Thermodesulfobacteriota</taxon>
        <taxon>Desulfovibrionia</taxon>
        <taxon>Desulfovibrionales</taxon>
        <taxon>Desulfovibrionaceae</taxon>
        <taxon>Lawsonia</taxon>
    </lineage>
</organism>
<gene>
    <name evidence="1" type="primary">yidC</name>
    <name type="ordered locus">LI1070</name>
</gene>
<protein>
    <recommendedName>
        <fullName evidence="1">Membrane protein insertase YidC</fullName>
    </recommendedName>
    <alternativeName>
        <fullName evidence="1">Foldase YidC</fullName>
    </alternativeName>
    <alternativeName>
        <fullName evidence="1">Membrane integrase YidC</fullName>
    </alternativeName>
    <alternativeName>
        <fullName evidence="1">Membrane protein YidC</fullName>
    </alternativeName>
</protein>
<keyword id="KW-1003">Cell membrane</keyword>
<keyword id="KW-0143">Chaperone</keyword>
<keyword id="KW-0472">Membrane</keyword>
<keyword id="KW-0653">Protein transport</keyword>
<keyword id="KW-1185">Reference proteome</keyword>
<keyword id="KW-0812">Transmembrane</keyword>
<keyword id="KW-1133">Transmembrane helix</keyword>
<keyword id="KW-0813">Transport</keyword>
<evidence type="ECO:0000255" key="1">
    <source>
        <dbReference type="HAMAP-Rule" id="MF_01810"/>
    </source>
</evidence>
<dbReference type="EMBL" id="AM180252">
    <property type="protein sequence ID" value="CAJ55124.1"/>
    <property type="molecule type" value="Genomic_DNA"/>
</dbReference>
<dbReference type="RefSeq" id="WP_011527153.1">
    <property type="nucleotide sequence ID" value="NC_008011.1"/>
</dbReference>
<dbReference type="SMR" id="Q1MPF3"/>
<dbReference type="STRING" id="363253.LI1070"/>
<dbReference type="KEGG" id="lip:LI1070"/>
<dbReference type="eggNOG" id="COG0706">
    <property type="taxonomic scope" value="Bacteria"/>
</dbReference>
<dbReference type="HOGENOM" id="CLU_016535_3_0_7"/>
<dbReference type="OrthoDB" id="9780552at2"/>
<dbReference type="Proteomes" id="UP000002430">
    <property type="component" value="Chromosome"/>
</dbReference>
<dbReference type="GO" id="GO:0005886">
    <property type="term" value="C:plasma membrane"/>
    <property type="evidence" value="ECO:0007669"/>
    <property type="project" value="UniProtKB-SubCell"/>
</dbReference>
<dbReference type="GO" id="GO:0032977">
    <property type="term" value="F:membrane insertase activity"/>
    <property type="evidence" value="ECO:0007669"/>
    <property type="project" value="InterPro"/>
</dbReference>
<dbReference type="GO" id="GO:0051205">
    <property type="term" value="P:protein insertion into membrane"/>
    <property type="evidence" value="ECO:0007669"/>
    <property type="project" value="TreeGrafter"/>
</dbReference>
<dbReference type="GO" id="GO:0015031">
    <property type="term" value="P:protein transport"/>
    <property type="evidence" value="ECO:0007669"/>
    <property type="project" value="UniProtKB-KW"/>
</dbReference>
<dbReference type="CDD" id="cd20070">
    <property type="entry name" value="5TM_YidC_Alb3"/>
    <property type="match status" value="1"/>
</dbReference>
<dbReference type="CDD" id="cd19961">
    <property type="entry name" value="EcYidC-like_peri"/>
    <property type="match status" value="1"/>
</dbReference>
<dbReference type="Gene3D" id="2.70.98.90">
    <property type="match status" value="1"/>
</dbReference>
<dbReference type="HAMAP" id="MF_01810">
    <property type="entry name" value="YidC_type1"/>
    <property type="match status" value="1"/>
</dbReference>
<dbReference type="InterPro" id="IPR019998">
    <property type="entry name" value="Membr_insert_YidC"/>
</dbReference>
<dbReference type="InterPro" id="IPR028053">
    <property type="entry name" value="Membr_insert_YidC_N"/>
</dbReference>
<dbReference type="InterPro" id="IPR001708">
    <property type="entry name" value="YidC/ALB3/OXA1/COX18"/>
</dbReference>
<dbReference type="InterPro" id="IPR028055">
    <property type="entry name" value="YidC/Oxa/ALB_C"/>
</dbReference>
<dbReference type="InterPro" id="IPR047196">
    <property type="entry name" value="YidC_ALB_C"/>
</dbReference>
<dbReference type="InterPro" id="IPR038221">
    <property type="entry name" value="YidC_periplasmic_sf"/>
</dbReference>
<dbReference type="NCBIfam" id="TIGR03593">
    <property type="entry name" value="yidC_nterm"/>
    <property type="match status" value="1"/>
</dbReference>
<dbReference type="NCBIfam" id="TIGR03592">
    <property type="entry name" value="yidC_oxa1_cterm"/>
    <property type="match status" value="1"/>
</dbReference>
<dbReference type="PANTHER" id="PTHR12428:SF65">
    <property type="entry name" value="CYTOCHROME C OXIDASE ASSEMBLY PROTEIN COX18, MITOCHONDRIAL"/>
    <property type="match status" value="1"/>
</dbReference>
<dbReference type="PANTHER" id="PTHR12428">
    <property type="entry name" value="OXA1"/>
    <property type="match status" value="1"/>
</dbReference>
<dbReference type="Pfam" id="PF02096">
    <property type="entry name" value="60KD_IMP"/>
    <property type="match status" value="1"/>
</dbReference>
<dbReference type="Pfam" id="PF14849">
    <property type="entry name" value="YidC_periplas"/>
    <property type="match status" value="1"/>
</dbReference>
<dbReference type="PRINTS" id="PR00701">
    <property type="entry name" value="60KDINNERMP"/>
</dbReference>
<dbReference type="PRINTS" id="PR01900">
    <property type="entry name" value="YIDCPROTEIN"/>
</dbReference>
<proteinExistence type="inferred from homology"/>
<reference key="1">
    <citation type="submission" date="2005-11" db="EMBL/GenBank/DDBJ databases">
        <title>The complete genome sequence of Lawsonia intracellularis: the causative agent of proliferative enteropathy.</title>
        <authorList>
            <person name="Kaur K."/>
            <person name="Zhang Q."/>
            <person name="Beckler D."/>
            <person name="Munir S."/>
            <person name="Li L."/>
            <person name="Kinsley K."/>
            <person name="Herron L."/>
            <person name="Peterson A."/>
            <person name="May B."/>
            <person name="Singh S."/>
            <person name="Gebhart C."/>
            <person name="Kapur V."/>
        </authorList>
    </citation>
    <scope>NUCLEOTIDE SEQUENCE [LARGE SCALE GENOMIC DNA]</scope>
    <source>
        <strain>PHE/MN1-00</strain>
    </source>
</reference>